<evidence type="ECO:0000250" key="1">
    <source>
        <dbReference type="UniProtKB" id="F4K933"/>
    </source>
</evidence>
<evidence type="ECO:0000256" key="2">
    <source>
        <dbReference type="SAM" id="MobiDB-lite"/>
    </source>
</evidence>
<evidence type="ECO:0000269" key="3">
    <source>
    </source>
</evidence>
<evidence type="ECO:0000269" key="4">
    <source>
    </source>
</evidence>
<evidence type="ECO:0000303" key="5">
    <source>
    </source>
</evidence>
<evidence type="ECO:0000305" key="6"/>
<evidence type="ECO:0000305" key="7">
    <source>
    </source>
</evidence>
<evidence type="ECO:0000312" key="8">
    <source>
        <dbReference type="Araport" id="AT4G26170"/>
    </source>
</evidence>
<evidence type="ECO:0000312" key="9">
    <source>
        <dbReference type="EMBL" id="CAB39682.1"/>
    </source>
</evidence>
<dbReference type="EMBL" id="AL049483">
    <property type="protein sequence ID" value="CAB39682.1"/>
    <property type="status" value="ALT_SEQ"/>
    <property type="molecule type" value="Genomic_DNA"/>
</dbReference>
<dbReference type="EMBL" id="AL161564">
    <property type="protein sequence ID" value="CAB79472.1"/>
    <property type="status" value="ALT_SEQ"/>
    <property type="molecule type" value="Genomic_DNA"/>
</dbReference>
<dbReference type="EMBL" id="CP002687">
    <property type="protein sequence ID" value="AEE85166.1"/>
    <property type="molecule type" value="Genomic_DNA"/>
</dbReference>
<dbReference type="EMBL" id="Y10013">
    <property type="protein sequence ID" value="CAA71119.1"/>
    <property type="molecule type" value="mRNA"/>
</dbReference>
<dbReference type="PIR" id="A85303">
    <property type="entry name" value="A85303"/>
</dbReference>
<dbReference type="PIR" id="T04272">
    <property type="entry name" value="T04272"/>
</dbReference>
<dbReference type="RefSeq" id="NP_194347.4">
    <property type="nucleotide sequence ID" value="NM_118750.8"/>
</dbReference>
<dbReference type="STRING" id="3702.F4JU69"/>
<dbReference type="PaxDb" id="3702-AT4G26170.1"/>
<dbReference type="EnsemblPlants" id="AT4G26170.1">
    <property type="protein sequence ID" value="AT4G26170.1"/>
    <property type="gene ID" value="AT4G26170"/>
</dbReference>
<dbReference type="GeneID" id="828723"/>
<dbReference type="Gramene" id="AT4G26170.1">
    <property type="protein sequence ID" value="AT4G26170.1"/>
    <property type="gene ID" value="AT4G26170"/>
</dbReference>
<dbReference type="KEGG" id="ath:AT4G26170"/>
<dbReference type="Araport" id="AT4G26170"/>
<dbReference type="TAIR" id="AT4G26170">
    <property type="gene designation" value="ET1"/>
</dbReference>
<dbReference type="eggNOG" id="ENOG502QXNF">
    <property type="taxonomic scope" value="Eukaryota"/>
</dbReference>
<dbReference type="HOGENOM" id="CLU_539022_0_0_1"/>
<dbReference type="InParanoid" id="F4JU69"/>
<dbReference type="OMA" id="RRCWQHK"/>
<dbReference type="PRO" id="PR:F4JU69"/>
<dbReference type="Proteomes" id="UP000006548">
    <property type="component" value="Chromosome 4"/>
</dbReference>
<dbReference type="ExpressionAtlas" id="F4JU69">
    <property type="expression patterns" value="baseline and differential"/>
</dbReference>
<dbReference type="GO" id="GO:0005737">
    <property type="term" value="C:cytoplasm"/>
    <property type="evidence" value="ECO:0000314"/>
    <property type="project" value="UniProtKB"/>
</dbReference>
<dbReference type="GO" id="GO:0005634">
    <property type="term" value="C:nucleus"/>
    <property type="evidence" value="ECO:0000314"/>
    <property type="project" value="UniProtKB"/>
</dbReference>
<dbReference type="GO" id="GO:0003677">
    <property type="term" value="F:DNA binding"/>
    <property type="evidence" value="ECO:0000314"/>
    <property type="project" value="UniProtKB"/>
</dbReference>
<dbReference type="GO" id="GO:0006355">
    <property type="term" value="P:regulation of DNA-templated transcription"/>
    <property type="evidence" value="ECO:0007669"/>
    <property type="project" value="InterPro"/>
</dbReference>
<dbReference type="InterPro" id="IPR038909">
    <property type="entry name" value="Effector_transcript"/>
</dbReference>
<dbReference type="PANTHER" id="PTHR35133:SF4">
    <property type="entry name" value="PROTEIN EFFECTOR OF TRANSCRIPTION 1"/>
    <property type="match status" value="1"/>
</dbReference>
<dbReference type="PANTHER" id="PTHR35133">
    <property type="entry name" value="PROTEIN EFFECTOR OF TRANSCRIPTION 2-RELATED"/>
    <property type="match status" value="1"/>
</dbReference>
<gene>
    <name evidence="5" type="primary">ET1</name>
    <name evidence="8" type="ordered locus">At4g26170</name>
    <name evidence="9" type="ORF">F20B18.280</name>
</gene>
<proteinExistence type="evidence at transcript level"/>
<feature type="chain" id="PRO_0000436018" description="Protein EFFECTOR OF TRANSCRIPTION 1">
    <location>
        <begin position="1"/>
        <end position="506"/>
    </location>
</feature>
<feature type="domain" description="GIY-YIG" evidence="7">
    <location>
        <begin position="185"/>
        <end position="225"/>
    </location>
</feature>
<feature type="repeat" description="Cx9Cx9RCx2HK" evidence="7">
    <location>
        <begin position="306"/>
        <end position="331"/>
    </location>
</feature>
<feature type="repeat" description="Cx9Cx9RCx2HK" evidence="7">
    <location>
        <begin position="361"/>
        <end position="386"/>
    </location>
</feature>
<feature type="repeat" description="Cx9Cx9RCx2HK" evidence="7">
    <location>
        <begin position="428"/>
        <end position="453"/>
    </location>
</feature>
<feature type="repeat" description="Cx9Cx9RCx2HK" evidence="7">
    <location>
        <begin position="475"/>
        <end position="500"/>
    </location>
</feature>
<feature type="region of interest" description="Disordered" evidence="2">
    <location>
        <begin position="234"/>
        <end position="298"/>
    </location>
</feature>
<feature type="region of interest" description="Disordered" evidence="2">
    <location>
        <begin position="404"/>
        <end position="426"/>
    </location>
</feature>
<feature type="compositionally biased region" description="Polar residues" evidence="2">
    <location>
        <begin position="234"/>
        <end position="247"/>
    </location>
</feature>
<feature type="compositionally biased region" description="Basic and acidic residues" evidence="2">
    <location>
        <begin position="248"/>
        <end position="272"/>
    </location>
</feature>
<feature type="compositionally biased region" description="Low complexity" evidence="2">
    <location>
        <begin position="273"/>
        <end position="288"/>
    </location>
</feature>
<feature type="compositionally biased region" description="Basic and acidic residues" evidence="2">
    <location>
        <begin position="404"/>
        <end position="413"/>
    </location>
</feature>
<feature type="compositionally biased region" description="Polar residues" evidence="2">
    <location>
        <begin position="414"/>
        <end position="423"/>
    </location>
</feature>
<organism>
    <name type="scientific">Arabidopsis thaliana</name>
    <name type="common">Mouse-ear cress</name>
    <dbReference type="NCBI Taxonomy" id="3702"/>
    <lineage>
        <taxon>Eukaryota</taxon>
        <taxon>Viridiplantae</taxon>
        <taxon>Streptophyta</taxon>
        <taxon>Embryophyta</taxon>
        <taxon>Tracheophyta</taxon>
        <taxon>Spermatophyta</taxon>
        <taxon>Magnoliopsida</taxon>
        <taxon>eudicotyledons</taxon>
        <taxon>Gunneridae</taxon>
        <taxon>Pentapetalae</taxon>
        <taxon>rosids</taxon>
        <taxon>malvids</taxon>
        <taxon>Brassicales</taxon>
        <taxon>Brassicaceae</taxon>
        <taxon>Camelineae</taxon>
        <taxon>Arabidopsis</taxon>
    </lineage>
</organism>
<reference key="1">
    <citation type="journal article" date="1999" name="Nature">
        <title>Sequence and analysis of chromosome 4 of the plant Arabidopsis thaliana.</title>
        <authorList>
            <person name="Mayer K.F.X."/>
            <person name="Schueller C."/>
            <person name="Wambutt R."/>
            <person name="Murphy G."/>
            <person name="Volckaert G."/>
            <person name="Pohl T."/>
            <person name="Duesterhoeft A."/>
            <person name="Stiekema W."/>
            <person name="Entian K.-D."/>
            <person name="Terryn N."/>
            <person name="Harris B."/>
            <person name="Ansorge W."/>
            <person name="Brandt P."/>
            <person name="Grivell L.A."/>
            <person name="Rieger M."/>
            <person name="Weichselgartner M."/>
            <person name="de Simone V."/>
            <person name="Obermaier B."/>
            <person name="Mache R."/>
            <person name="Mueller M."/>
            <person name="Kreis M."/>
            <person name="Delseny M."/>
            <person name="Puigdomenech P."/>
            <person name="Watson M."/>
            <person name="Schmidtheini T."/>
            <person name="Reichert B."/>
            <person name="Portetelle D."/>
            <person name="Perez-Alonso M."/>
            <person name="Boutry M."/>
            <person name="Bancroft I."/>
            <person name="Vos P."/>
            <person name="Hoheisel J."/>
            <person name="Zimmermann W."/>
            <person name="Wedler H."/>
            <person name="Ridley P."/>
            <person name="Langham S.-A."/>
            <person name="McCullagh B."/>
            <person name="Bilham L."/>
            <person name="Robben J."/>
            <person name="van der Schueren J."/>
            <person name="Grymonprez B."/>
            <person name="Chuang Y.-J."/>
            <person name="Vandenbussche F."/>
            <person name="Braeken M."/>
            <person name="Weltjens I."/>
            <person name="Voet M."/>
            <person name="Bastiaens I."/>
            <person name="Aert R."/>
            <person name="Defoor E."/>
            <person name="Weitzenegger T."/>
            <person name="Bothe G."/>
            <person name="Ramsperger U."/>
            <person name="Hilbert H."/>
            <person name="Braun M."/>
            <person name="Holzer E."/>
            <person name="Brandt A."/>
            <person name="Peters S."/>
            <person name="van Staveren M."/>
            <person name="Dirkse W."/>
            <person name="Mooijman P."/>
            <person name="Klein Lankhorst R."/>
            <person name="Rose M."/>
            <person name="Hauf J."/>
            <person name="Koetter P."/>
            <person name="Berneiser S."/>
            <person name="Hempel S."/>
            <person name="Feldpausch M."/>
            <person name="Lamberth S."/>
            <person name="Van den Daele H."/>
            <person name="De Keyser A."/>
            <person name="Buysshaert C."/>
            <person name="Gielen J."/>
            <person name="Villarroel R."/>
            <person name="De Clercq R."/>
            <person name="van Montagu M."/>
            <person name="Rogers J."/>
            <person name="Cronin A."/>
            <person name="Quail M.A."/>
            <person name="Bray-Allen S."/>
            <person name="Clark L."/>
            <person name="Doggett J."/>
            <person name="Hall S."/>
            <person name="Kay M."/>
            <person name="Lennard N."/>
            <person name="McLay K."/>
            <person name="Mayes R."/>
            <person name="Pettett A."/>
            <person name="Rajandream M.A."/>
            <person name="Lyne M."/>
            <person name="Benes V."/>
            <person name="Rechmann S."/>
            <person name="Borkova D."/>
            <person name="Bloecker H."/>
            <person name="Scharfe M."/>
            <person name="Grimm M."/>
            <person name="Loehnert T.-H."/>
            <person name="Dose S."/>
            <person name="de Haan M."/>
            <person name="Maarse A.C."/>
            <person name="Schaefer M."/>
            <person name="Mueller-Auer S."/>
            <person name="Gabel C."/>
            <person name="Fuchs M."/>
            <person name="Fartmann B."/>
            <person name="Granderath K."/>
            <person name="Dauner D."/>
            <person name="Herzl A."/>
            <person name="Neumann S."/>
            <person name="Argiriou A."/>
            <person name="Vitale D."/>
            <person name="Liguori R."/>
            <person name="Piravandi E."/>
            <person name="Massenet O."/>
            <person name="Quigley F."/>
            <person name="Clabauld G."/>
            <person name="Muendlein A."/>
            <person name="Felber R."/>
            <person name="Schnabl S."/>
            <person name="Hiller R."/>
            <person name="Schmidt W."/>
            <person name="Lecharny A."/>
            <person name="Aubourg S."/>
            <person name="Chefdor F."/>
            <person name="Cooke R."/>
            <person name="Berger C."/>
            <person name="Monfort A."/>
            <person name="Casacuberta E."/>
            <person name="Gibbons T."/>
            <person name="Weber N."/>
            <person name="Vandenbol M."/>
            <person name="Bargues M."/>
            <person name="Terol J."/>
            <person name="Torres A."/>
            <person name="Perez-Perez A."/>
            <person name="Purnelle B."/>
            <person name="Bent E."/>
            <person name="Johnson S."/>
            <person name="Tacon D."/>
            <person name="Jesse T."/>
            <person name="Heijnen L."/>
            <person name="Schwarz S."/>
            <person name="Scholler P."/>
            <person name="Heber S."/>
            <person name="Francs P."/>
            <person name="Bielke C."/>
            <person name="Frishman D."/>
            <person name="Haase D."/>
            <person name="Lemcke K."/>
            <person name="Mewes H.-W."/>
            <person name="Stocker S."/>
            <person name="Zaccaria P."/>
            <person name="Bevan M."/>
            <person name="Wilson R.K."/>
            <person name="de la Bastide M."/>
            <person name="Habermann K."/>
            <person name="Parnell L."/>
            <person name="Dedhia N."/>
            <person name="Gnoj L."/>
            <person name="Schutz K."/>
            <person name="Huang E."/>
            <person name="Spiegel L."/>
            <person name="Sekhon M."/>
            <person name="Murray J."/>
            <person name="Sheet P."/>
            <person name="Cordes M."/>
            <person name="Abu-Threideh J."/>
            <person name="Stoneking T."/>
            <person name="Kalicki J."/>
            <person name="Graves T."/>
            <person name="Harmon G."/>
            <person name="Edwards J."/>
            <person name="Latreille P."/>
            <person name="Courtney L."/>
            <person name="Cloud J."/>
            <person name="Abbott A."/>
            <person name="Scott K."/>
            <person name="Johnson D."/>
            <person name="Minx P."/>
            <person name="Bentley D."/>
            <person name="Fulton B."/>
            <person name="Miller N."/>
            <person name="Greco T."/>
            <person name="Kemp K."/>
            <person name="Kramer J."/>
            <person name="Fulton L."/>
            <person name="Mardis E."/>
            <person name="Dante M."/>
            <person name="Pepin K."/>
            <person name="Hillier L.W."/>
            <person name="Nelson J."/>
            <person name="Spieth J."/>
            <person name="Ryan E."/>
            <person name="Andrews S."/>
            <person name="Geisel C."/>
            <person name="Layman D."/>
            <person name="Du H."/>
            <person name="Ali J."/>
            <person name="Berghoff A."/>
            <person name="Jones K."/>
            <person name="Drone K."/>
            <person name="Cotton M."/>
            <person name="Joshu C."/>
            <person name="Antonoiu B."/>
            <person name="Zidanic M."/>
            <person name="Strong C."/>
            <person name="Sun H."/>
            <person name="Lamar B."/>
            <person name="Yordan C."/>
            <person name="Ma P."/>
            <person name="Zhong J."/>
            <person name="Preston R."/>
            <person name="Vil D."/>
            <person name="Shekher M."/>
            <person name="Matero A."/>
            <person name="Shah R."/>
            <person name="Swaby I.K."/>
            <person name="O'Shaughnessy A."/>
            <person name="Rodriguez M."/>
            <person name="Hoffman J."/>
            <person name="Till S."/>
            <person name="Granat S."/>
            <person name="Shohdy N."/>
            <person name="Hasegawa A."/>
            <person name="Hameed A."/>
            <person name="Lodhi M."/>
            <person name="Johnson A."/>
            <person name="Chen E."/>
            <person name="Marra M.A."/>
            <person name="Martienssen R."/>
            <person name="McCombie W.R."/>
        </authorList>
    </citation>
    <scope>NUCLEOTIDE SEQUENCE [LARGE SCALE GENOMIC DNA]</scope>
    <source>
        <strain>cv. Columbia</strain>
    </source>
</reference>
<reference key="2">
    <citation type="journal article" date="2017" name="Plant J.">
        <title>Araport11: a complete reannotation of the Arabidopsis thaliana reference genome.</title>
        <authorList>
            <person name="Cheng C.Y."/>
            <person name="Krishnakumar V."/>
            <person name="Chan A.P."/>
            <person name="Thibaud-Nissen F."/>
            <person name="Schobel S."/>
            <person name="Town C.D."/>
        </authorList>
    </citation>
    <scope>GENOME REANNOTATION</scope>
    <source>
        <strain>cv. Columbia</strain>
    </source>
</reference>
<reference key="3">
    <citation type="submission" date="1996-12" db="EMBL/GenBank/DDBJ databases">
        <title>Arabidopsis thaliana mRNA for putative transcription factor.</title>
        <authorList>
            <person name="Wohlfarth T."/>
        </authorList>
    </citation>
    <scope>NUCLEOTIDE SEQUENCE [MRNA] OF 163-506</scope>
    <source>
        <tissue>Seed</tissue>
    </source>
</reference>
<reference key="4">
    <citation type="journal article" date="2008" name="Dev. Biol.">
        <title>EFFECTOR OF TRANSCRIPTION2 is involved in xylem differentiation and includes a functional DNA single strand cutting domain.</title>
        <authorList>
            <person name="Ivanov R."/>
            <person name="Tiedemann J."/>
            <person name="Czihal A."/>
            <person name="Schallau A."/>
            <person name="Diep L.H."/>
            <person name="Mock H.P."/>
            <person name="Claus B."/>
            <person name="Tewes A."/>
            <person name="Baeumlein H."/>
        </authorList>
    </citation>
    <scope>SUBCELLULAR LOCATION</scope>
    <scope>TISSUE SPECIFICITY</scope>
    <scope>GIY-YIG DOMAIN</scope>
</reference>
<reference key="5">
    <citation type="journal article" date="2012" name="J. Plant Physiol.">
        <title>Transcriptional regulator AtET2 is required for the induction of dormancy during late seed development.</title>
        <authorList>
            <person name="Ivanov R."/>
            <person name="Tiedemann J."/>
            <person name="Czihal A."/>
            <person name="Baumlein H."/>
        </authorList>
    </citation>
    <scope>FUNCTION</scope>
</reference>
<comment type="function">
    <text evidence="1 4">Transcriptional regulator involved in the regulation of cell differentiation in meristems (By similarity). Binds DNA without sequence preference (PubMed:22226340).</text>
</comment>
<comment type="subcellular location">
    <subcellularLocation>
        <location evidence="3">Cytoplasm</location>
    </subcellularLocation>
    <subcellularLocation>
        <location evidence="3">Nucleus</location>
    </subcellularLocation>
    <text evidence="3">Localizes to the cytoplasm in non-differentiating cells and to the nucleus in differentiating cells.</text>
</comment>
<comment type="tissue specificity">
    <text evidence="3">Expressed in rosette leaves, stipules, stems, flowers, siliques and mature seeds. Expressed in the vascular bundles of xylem in shoot parenchyma cells. Expressed in the remnant cytoplasm of differentiated fiber cells and in protoxylem element of parenchymal cells.</text>
</comment>
<comment type="domain">
    <text evidence="7">Contains a bacterial GIY-YIG-like domain.</text>
</comment>
<comment type="sequence caution" evidence="6">
    <conflict type="erroneous gene model prediction">
        <sequence resource="EMBL-CDS" id="CAB39682"/>
    </conflict>
</comment>
<comment type="sequence caution" evidence="6">
    <conflict type="erroneous gene model prediction">
        <sequence resource="EMBL-CDS" id="CAB79472"/>
    </conflict>
</comment>
<name>ET1_ARATH</name>
<accession>F4JU69</accession>
<accession>O04047</accession>
<accession>Q9SZI8</accession>
<sequence length="506" mass="57003">MLVVLQIHSSINVKVFASRLRKHFFFTRRKITRIATCLSSSRCPLYPSHWNLCRWNNKQGGTEIGLLIGGLIVFRQTLKSDQETKREQKKRDWILVTAFPSPSCSPCSRETTTFELIMTPFFQSGRVSPDLCFCVNPFQKLQNSQDFCGLLLNFSRFRSKAKGANEKENFREGKDLVGRNRVQGAFQGLYELSHDHGRKDDVLVANLGQPESIRSRLRSYSRSFAHHDLLKQGLSQTILPTTQNKSDNQTEEKKSDSEEEREVSSDAAEKESNSLPSILRLSRSRPQPVSEKHDDIVDESDSASACGVLLEDGTTCTTTPVKGRKRCTEHKGKRLSRVSPGIHIPCEVPTVRECEETENICGVILPDMIRCRSKPVSRRKRCEDHKGMRVNAFFFLLNPTERDKAVNEDKSKPETSTGMNQEGSGLLCEATTKNGLPCTRSAPEGSKRCWQHKDKTLNHGSSENVQSATASQVICGFKLYNGSVCEKSPVKGRKRCEEHKGMRITS</sequence>
<keyword id="KW-0963">Cytoplasm</keyword>
<keyword id="KW-0238">DNA-binding</keyword>
<keyword id="KW-0539">Nucleus</keyword>
<keyword id="KW-1185">Reference proteome</keyword>
<keyword id="KW-0677">Repeat</keyword>
<keyword id="KW-0804">Transcription</keyword>
<keyword id="KW-0805">Transcription regulation</keyword>
<protein>
    <recommendedName>
        <fullName evidence="5">Protein EFFECTOR OF TRANSCRIPTION 1</fullName>
        <shortName evidence="5">AtET1</shortName>
    </recommendedName>
</protein>